<evidence type="ECO:0000250" key="1"/>
<evidence type="ECO:0000269" key="2">
    <source>
    </source>
</evidence>
<evidence type="ECO:0000269" key="3">
    <source>
    </source>
</evidence>
<evidence type="ECO:0000269" key="4">
    <source>
    </source>
</evidence>
<evidence type="ECO:0000269" key="5">
    <source>
    </source>
</evidence>
<evidence type="ECO:0000305" key="6"/>
<dbReference type="EMBL" id="AF419953">
    <property type="protein sequence ID" value="AAL16056.1"/>
    <property type="molecule type" value="mRNA"/>
</dbReference>
<dbReference type="EMBL" id="AF419954">
    <property type="protein sequence ID" value="AAL16057.1"/>
    <property type="molecule type" value="mRNA"/>
</dbReference>
<dbReference type="EMBL" id="AF419955">
    <property type="protein sequence ID" value="AAL16058.1"/>
    <property type="molecule type" value="mRNA"/>
</dbReference>
<dbReference type="EMBL" id="AY792323">
    <property type="protein sequence ID" value="AAV73920.1"/>
    <property type="molecule type" value="mRNA"/>
</dbReference>
<dbReference type="EMBL" id="AY792324">
    <property type="protein sequence ID" value="AAV73921.1"/>
    <property type="molecule type" value="mRNA"/>
</dbReference>
<dbReference type="EMBL" id="AY792325">
    <property type="protein sequence ID" value="AAV73922.1"/>
    <property type="molecule type" value="mRNA"/>
</dbReference>
<dbReference type="EMBL" id="AY792326">
    <property type="protein sequence ID" value="AAV73923.1"/>
    <property type="molecule type" value="mRNA"/>
</dbReference>
<dbReference type="EMBL" id="AK292775">
    <property type="protein sequence ID" value="BAF85464.1"/>
    <property type="molecule type" value="mRNA"/>
</dbReference>
<dbReference type="EMBL" id="AC069356">
    <property type="status" value="NOT_ANNOTATED_CDS"/>
    <property type="molecule type" value="Genomic_DNA"/>
</dbReference>
<dbReference type="EMBL" id="BC069596">
    <property type="protein sequence ID" value="AAH69596.1"/>
    <property type="molecule type" value="mRNA"/>
</dbReference>
<dbReference type="CCDS" id="CCDS77196.1">
    <molecule id="Q96P15-2"/>
</dbReference>
<dbReference type="RefSeq" id="NP_001278207.1">
    <molecule id="Q96P15-2"/>
    <property type="nucleotide sequence ID" value="NM_001291278.2"/>
</dbReference>
<dbReference type="RefSeq" id="NP_001357404.1">
    <molecule id="Q96P15-1"/>
    <property type="nucleotide sequence ID" value="NM_001370475.1"/>
</dbReference>
<dbReference type="RefSeq" id="NP_536723.2">
    <molecule id="Q96P15-1"/>
    <property type="nucleotide sequence ID" value="NM_080475.5"/>
</dbReference>
<dbReference type="RefSeq" id="XP_011524553.1">
    <property type="nucleotide sequence ID" value="XM_011526251.1"/>
</dbReference>
<dbReference type="SMR" id="Q96P15"/>
<dbReference type="BioGRID" id="124598">
    <property type="interactions" value="10"/>
</dbReference>
<dbReference type="FunCoup" id="Q96P15">
    <property type="interactions" value="58"/>
</dbReference>
<dbReference type="IntAct" id="Q96P15">
    <property type="interactions" value="4"/>
</dbReference>
<dbReference type="STRING" id="9606.ENSP00000485532"/>
<dbReference type="MEROPS" id="I04.956"/>
<dbReference type="iPTMnet" id="Q96P15"/>
<dbReference type="PhosphoSitePlus" id="Q96P15"/>
<dbReference type="BioMuta" id="SERPINB11"/>
<dbReference type="DMDM" id="20140144"/>
<dbReference type="MassIVE" id="Q96P15"/>
<dbReference type="PaxDb" id="9606-ENSP00000441497"/>
<dbReference type="PeptideAtlas" id="Q96P15"/>
<dbReference type="ProteomicsDB" id="77594">
    <molecule id="Q96P15-1"/>
</dbReference>
<dbReference type="Antibodypedia" id="23130">
    <property type="antibodies" value="123 antibodies from 20 providers"/>
</dbReference>
<dbReference type="DNASU" id="89778"/>
<dbReference type="Ensembl" id="ENST00000382749.9">
    <molecule id="Q96P15-1"/>
    <property type="protein sequence ID" value="ENSP00000421854.1"/>
    <property type="gene ID" value="ENSG00000206072.13"/>
</dbReference>
<dbReference type="Ensembl" id="ENST00000544088.6">
    <molecule id="Q96P15-1"/>
    <property type="protein sequence ID" value="ENSP00000441497.1"/>
    <property type="gene ID" value="ENSG00000206072.13"/>
</dbReference>
<dbReference type="Ensembl" id="ENST00000623262.3">
    <molecule id="Q96P15-2"/>
    <property type="protein sequence ID" value="ENSP00000485532.1"/>
    <property type="gene ID" value="ENSG00000206072.13"/>
</dbReference>
<dbReference type="Ensembl" id="ENST00000624518.1">
    <molecule id="Q96P15-3"/>
    <property type="protein sequence ID" value="ENSP00000485426.1"/>
    <property type="gene ID" value="ENSG00000206072.13"/>
</dbReference>
<dbReference type="GeneID" id="89778"/>
<dbReference type="KEGG" id="hsa:89778"/>
<dbReference type="MANE-Select" id="ENST00000544088.6">
    <property type="protein sequence ID" value="ENSP00000441497.1"/>
    <property type="RefSeq nucleotide sequence ID" value="NM_001370475.1"/>
    <property type="RefSeq protein sequence ID" value="NP_001357404.1"/>
</dbReference>
<dbReference type="UCSC" id="uc032hfq.2">
    <molecule id="Q96P15-1"/>
    <property type="organism name" value="human"/>
</dbReference>
<dbReference type="AGR" id="HGNC:14221"/>
<dbReference type="CTD" id="89778"/>
<dbReference type="DisGeNET" id="89778"/>
<dbReference type="GeneCards" id="SERPINB11"/>
<dbReference type="HGNC" id="HGNC:14221">
    <property type="gene designation" value="SERPINB11"/>
</dbReference>
<dbReference type="HPA" id="ENSG00000206072">
    <property type="expression patterns" value="Tissue enhanced (esophagus, prostate)"/>
</dbReference>
<dbReference type="MIM" id="615682">
    <property type="type" value="gene"/>
</dbReference>
<dbReference type="neXtProt" id="NX_Q96P15"/>
<dbReference type="OpenTargets" id="ENSG00000206072"/>
<dbReference type="PharmGKB" id="PA37860"/>
<dbReference type="VEuPathDB" id="HostDB:ENSG00000206072"/>
<dbReference type="eggNOG" id="KOG2392">
    <property type="taxonomic scope" value="Eukaryota"/>
</dbReference>
<dbReference type="GeneTree" id="ENSGT00940000161560"/>
<dbReference type="InParanoid" id="Q96P15"/>
<dbReference type="OMA" id="FKATWEH"/>
<dbReference type="OrthoDB" id="671595at2759"/>
<dbReference type="PAN-GO" id="Q96P15">
    <property type="GO annotations" value="3 GO annotations based on evolutionary models"/>
</dbReference>
<dbReference type="PhylomeDB" id="Q96P15"/>
<dbReference type="PathwayCommons" id="Q96P15"/>
<dbReference type="BioGRID-ORCS" id="89778">
    <property type="hits" value="3 hits in 241 CRISPR screens"/>
</dbReference>
<dbReference type="ChiTaRS" id="SERPINB11">
    <property type="organism name" value="human"/>
</dbReference>
<dbReference type="GenomeRNAi" id="89778"/>
<dbReference type="Pharos" id="Q96P15">
    <property type="development level" value="Tbio"/>
</dbReference>
<dbReference type="PRO" id="PR:Q96P15"/>
<dbReference type="Proteomes" id="UP000005640">
    <property type="component" value="Chromosome 18"/>
</dbReference>
<dbReference type="RNAct" id="Q96P15">
    <property type="molecule type" value="protein"/>
</dbReference>
<dbReference type="Bgee" id="ENSG00000206072">
    <property type="expression patterns" value="Expressed in olfactory segment of nasal mucosa and 79 other cell types or tissues"/>
</dbReference>
<dbReference type="ExpressionAtlas" id="Q96P15">
    <property type="expression patterns" value="baseline and differential"/>
</dbReference>
<dbReference type="GO" id="GO:0005737">
    <property type="term" value="C:cytoplasm"/>
    <property type="evidence" value="ECO:0007669"/>
    <property type="project" value="UniProtKB-SubCell"/>
</dbReference>
<dbReference type="GO" id="GO:0005615">
    <property type="term" value="C:extracellular space"/>
    <property type="evidence" value="ECO:0000318"/>
    <property type="project" value="GO_Central"/>
</dbReference>
<dbReference type="GO" id="GO:0004867">
    <property type="term" value="F:serine-type endopeptidase inhibitor activity"/>
    <property type="evidence" value="ECO:0000318"/>
    <property type="project" value="GO_Central"/>
</dbReference>
<dbReference type="CDD" id="cd19570">
    <property type="entry name" value="serpinB11_epipin"/>
    <property type="match status" value="1"/>
</dbReference>
<dbReference type="FunFam" id="3.30.497.10:FF:000001">
    <property type="entry name" value="Serine protease inhibitor"/>
    <property type="match status" value="1"/>
</dbReference>
<dbReference type="FunFam" id="2.30.39.10:FF:000001">
    <property type="entry name" value="Serpin family B member 2"/>
    <property type="match status" value="1"/>
</dbReference>
<dbReference type="Gene3D" id="2.30.39.10">
    <property type="entry name" value="Alpha-1-antitrypsin, domain 1"/>
    <property type="match status" value="1"/>
</dbReference>
<dbReference type="Gene3D" id="3.30.497.10">
    <property type="entry name" value="Antithrombin, subunit I, domain 2"/>
    <property type="match status" value="1"/>
</dbReference>
<dbReference type="InterPro" id="IPR023795">
    <property type="entry name" value="Serpin_CS"/>
</dbReference>
<dbReference type="InterPro" id="IPR023796">
    <property type="entry name" value="Serpin_dom"/>
</dbReference>
<dbReference type="InterPro" id="IPR000215">
    <property type="entry name" value="Serpin_fam"/>
</dbReference>
<dbReference type="InterPro" id="IPR036186">
    <property type="entry name" value="Serpin_sf"/>
</dbReference>
<dbReference type="InterPro" id="IPR042178">
    <property type="entry name" value="Serpin_sf_1"/>
</dbReference>
<dbReference type="InterPro" id="IPR042185">
    <property type="entry name" value="Serpin_sf_2"/>
</dbReference>
<dbReference type="PANTHER" id="PTHR11461">
    <property type="entry name" value="SERINE PROTEASE INHIBITOR, SERPIN"/>
    <property type="match status" value="1"/>
</dbReference>
<dbReference type="PANTHER" id="PTHR11461:SF199">
    <property type="entry name" value="SERPIN B11"/>
    <property type="match status" value="1"/>
</dbReference>
<dbReference type="Pfam" id="PF00079">
    <property type="entry name" value="Serpin"/>
    <property type="match status" value="1"/>
</dbReference>
<dbReference type="SMART" id="SM00093">
    <property type="entry name" value="SERPIN"/>
    <property type="match status" value="1"/>
</dbReference>
<dbReference type="SUPFAM" id="SSF56574">
    <property type="entry name" value="Serpins"/>
    <property type="match status" value="1"/>
</dbReference>
<dbReference type="PROSITE" id="PS00284">
    <property type="entry name" value="SERPIN"/>
    <property type="match status" value="1"/>
</dbReference>
<proteinExistence type="evidence at protein level"/>
<protein>
    <recommendedName>
        <fullName>Serpin B11</fullName>
    </recommendedName>
</protein>
<reference key="1">
    <citation type="journal article" date="2007" name="J. Biol. Chem.">
        <title>SERPINB11 is a new noninhibitory intracellular serpin. Common single nucleotide polymorphisms in the scaffold impair conformational change.</title>
        <authorList>
            <person name="Askew D.J."/>
            <person name="Cataltepe S."/>
            <person name="Kumar V."/>
            <person name="Edwards C."/>
            <person name="Pace S.M."/>
            <person name="Howarth R.N."/>
            <person name="Pak S.C."/>
            <person name="Askew Y.S."/>
            <person name="Bromme D."/>
            <person name="Luke C.J."/>
            <person name="Whisstock J.C."/>
            <person name="Silverman G.A."/>
        </authorList>
    </citation>
    <scope>NUCLEOTIDE SEQUENCE [MRNA]</scope>
    <scope>FUNCTION</scope>
    <scope>TISSUE SPECIFICITY</scope>
    <scope>VARIANTS ALA-51; 90-GLU--PRO-392 DEL; MET-148; ILE-181; THR-181; ARG-188; ILE-293 AND PRO-303</scope>
</reference>
<reference key="2">
    <citation type="journal article" date="2004" name="Nat. Genet.">
        <title>Complete sequencing and characterization of 21,243 full-length human cDNAs.</title>
        <authorList>
            <person name="Ota T."/>
            <person name="Suzuki Y."/>
            <person name="Nishikawa T."/>
            <person name="Otsuki T."/>
            <person name="Sugiyama T."/>
            <person name="Irie R."/>
            <person name="Wakamatsu A."/>
            <person name="Hayashi K."/>
            <person name="Sato H."/>
            <person name="Nagai K."/>
            <person name="Kimura K."/>
            <person name="Makita H."/>
            <person name="Sekine M."/>
            <person name="Obayashi M."/>
            <person name="Nishi T."/>
            <person name="Shibahara T."/>
            <person name="Tanaka T."/>
            <person name="Ishii S."/>
            <person name="Yamamoto J."/>
            <person name="Saito K."/>
            <person name="Kawai Y."/>
            <person name="Isono Y."/>
            <person name="Nakamura Y."/>
            <person name="Nagahari K."/>
            <person name="Murakami K."/>
            <person name="Yasuda T."/>
            <person name="Iwayanagi T."/>
            <person name="Wagatsuma M."/>
            <person name="Shiratori A."/>
            <person name="Sudo H."/>
            <person name="Hosoiri T."/>
            <person name="Kaku Y."/>
            <person name="Kodaira H."/>
            <person name="Kondo H."/>
            <person name="Sugawara M."/>
            <person name="Takahashi M."/>
            <person name="Kanda K."/>
            <person name="Yokoi T."/>
            <person name="Furuya T."/>
            <person name="Kikkawa E."/>
            <person name="Omura Y."/>
            <person name="Abe K."/>
            <person name="Kamihara K."/>
            <person name="Katsuta N."/>
            <person name="Sato K."/>
            <person name="Tanikawa M."/>
            <person name="Yamazaki M."/>
            <person name="Ninomiya K."/>
            <person name="Ishibashi T."/>
            <person name="Yamashita H."/>
            <person name="Murakawa K."/>
            <person name="Fujimori K."/>
            <person name="Tanai H."/>
            <person name="Kimata M."/>
            <person name="Watanabe M."/>
            <person name="Hiraoka S."/>
            <person name="Chiba Y."/>
            <person name="Ishida S."/>
            <person name="Ono Y."/>
            <person name="Takiguchi S."/>
            <person name="Watanabe S."/>
            <person name="Yosida M."/>
            <person name="Hotuta T."/>
            <person name="Kusano J."/>
            <person name="Kanehori K."/>
            <person name="Takahashi-Fujii A."/>
            <person name="Hara H."/>
            <person name="Tanase T.-O."/>
            <person name="Nomura Y."/>
            <person name="Togiya S."/>
            <person name="Komai F."/>
            <person name="Hara R."/>
            <person name="Takeuchi K."/>
            <person name="Arita M."/>
            <person name="Imose N."/>
            <person name="Musashino K."/>
            <person name="Yuuki H."/>
            <person name="Oshima A."/>
            <person name="Sasaki N."/>
            <person name="Aotsuka S."/>
            <person name="Yoshikawa Y."/>
            <person name="Matsunawa H."/>
            <person name="Ichihara T."/>
            <person name="Shiohata N."/>
            <person name="Sano S."/>
            <person name="Moriya S."/>
            <person name="Momiyama H."/>
            <person name="Satoh N."/>
            <person name="Takami S."/>
            <person name="Terashima Y."/>
            <person name="Suzuki O."/>
            <person name="Nakagawa S."/>
            <person name="Senoh A."/>
            <person name="Mizoguchi H."/>
            <person name="Goto Y."/>
            <person name="Shimizu F."/>
            <person name="Wakebe H."/>
            <person name="Hishigaki H."/>
            <person name="Watanabe T."/>
            <person name="Sugiyama A."/>
            <person name="Takemoto M."/>
            <person name="Kawakami B."/>
            <person name="Yamazaki M."/>
            <person name="Watanabe K."/>
            <person name="Kumagai A."/>
            <person name="Itakura S."/>
            <person name="Fukuzumi Y."/>
            <person name="Fujimori Y."/>
            <person name="Komiyama M."/>
            <person name="Tashiro H."/>
            <person name="Tanigami A."/>
            <person name="Fujiwara T."/>
            <person name="Ono T."/>
            <person name="Yamada K."/>
            <person name="Fujii Y."/>
            <person name="Ozaki K."/>
            <person name="Hirao M."/>
            <person name="Ohmori Y."/>
            <person name="Kawabata A."/>
            <person name="Hikiji T."/>
            <person name="Kobatake N."/>
            <person name="Inagaki H."/>
            <person name="Ikema Y."/>
            <person name="Okamoto S."/>
            <person name="Okitani R."/>
            <person name="Kawakami T."/>
            <person name="Noguchi S."/>
            <person name="Itoh T."/>
            <person name="Shigeta K."/>
            <person name="Senba T."/>
            <person name="Matsumura K."/>
            <person name="Nakajima Y."/>
            <person name="Mizuno T."/>
            <person name="Morinaga M."/>
            <person name="Sasaki M."/>
            <person name="Togashi T."/>
            <person name="Oyama M."/>
            <person name="Hata H."/>
            <person name="Watanabe M."/>
            <person name="Komatsu T."/>
            <person name="Mizushima-Sugano J."/>
            <person name="Satoh T."/>
            <person name="Shirai Y."/>
            <person name="Takahashi Y."/>
            <person name="Nakagawa K."/>
            <person name="Okumura K."/>
            <person name="Nagase T."/>
            <person name="Nomura N."/>
            <person name="Kikuchi H."/>
            <person name="Masuho Y."/>
            <person name="Yamashita R."/>
            <person name="Nakai K."/>
            <person name="Yada T."/>
            <person name="Nakamura Y."/>
            <person name="Ohara O."/>
            <person name="Isogai T."/>
            <person name="Sugano S."/>
        </authorList>
    </citation>
    <scope>NUCLEOTIDE SEQUENCE [LARGE SCALE MRNA]</scope>
    <scope>VARIANTS ALA-51; THR-181; ARG-188; ILE-293 AND PRO-303</scope>
    <source>
        <tissue>Trachea</tissue>
    </source>
</reference>
<reference key="3">
    <citation type="journal article" date="2005" name="Nature">
        <title>DNA sequence and analysis of human chromosome 18.</title>
        <authorList>
            <person name="Nusbaum C."/>
            <person name="Zody M.C."/>
            <person name="Borowsky M.L."/>
            <person name="Kamal M."/>
            <person name="Kodira C.D."/>
            <person name="Taylor T.D."/>
            <person name="Whittaker C.A."/>
            <person name="Chang J.L."/>
            <person name="Cuomo C.A."/>
            <person name="Dewar K."/>
            <person name="FitzGerald M.G."/>
            <person name="Yang X."/>
            <person name="Abouelleil A."/>
            <person name="Allen N.R."/>
            <person name="Anderson S."/>
            <person name="Bloom T."/>
            <person name="Bugalter B."/>
            <person name="Butler J."/>
            <person name="Cook A."/>
            <person name="DeCaprio D."/>
            <person name="Engels R."/>
            <person name="Garber M."/>
            <person name="Gnirke A."/>
            <person name="Hafez N."/>
            <person name="Hall J.L."/>
            <person name="Norman C.H."/>
            <person name="Itoh T."/>
            <person name="Jaffe D.B."/>
            <person name="Kuroki Y."/>
            <person name="Lehoczky J."/>
            <person name="Lui A."/>
            <person name="Macdonald P."/>
            <person name="Mauceli E."/>
            <person name="Mikkelsen T.S."/>
            <person name="Naylor J.W."/>
            <person name="Nicol R."/>
            <person name="Nguyen C."/>
            <person name="Noguchi H."/>
            <person name="O'Leary S.B."/>
            <person name="Piqani B."/>
            <person name="Smith C.L."/>
            <person name="Talamas J.A."/>
            <person name="Topham K."/>
            <person name="Totoki Y."/>
            <person name="Toyoda A."/>
            <person name="Wain H.M."/>
            <person name="Young S.K."/>
            <person name="Zeng Q."/>
            <person name="Zimmer A.R."/>
            <person name="Fujiyama A."/>
            <person name="Hattori M."/>
            <person name="Birren B.W."/>
            <person name="Sakaki Y."/>
            <person name="Lander E.S."/>
        </authorList>
    </citation>
    <scope>NUCLEOTIDE SEQUENCE [LARGE SCALE GENOMIC DNA]</scope>
</reference>
<reference key="4">
    <citation type="journal article" date="2004" name="Genome Res.">
        <title>The status, quality, and expansion of the NIH full-length cDNA project: the Mammalian Gene Collection (MGC).</title>
        <authorList>
            <consortium name="The MGC Project Team"/>
        </authorList>
    </citation>
    <scope>NUCLEOTIDE SEQUENCE [LARGE SCALE MRNA]</scope>
    <scope>VARIANTS ALA-51; MET-148; THR-181; ARG-188; ILE-293 AND PRO-303</scope>
</reference>
<name>SPB11_HUMAN</name>
<accession>Q96P15</accession>
<accession>A8K9R0</accession>
<accession>Q5Q120</accession>
<accession>Q5Q121</accession>
<accession>Q5Q122</accession>
<accession>Q5Q123</accession>
<accession>Q6ISD3</accession>
<accession>Q96P13</accession>
<accession>Q96P14</accession>
<comment type="function">
    <text evidence="5">Has no serine protease inhibitory activity, probably due to variants in the scaffold impairing conformational change.</text>
</comment>
<comment type="subcellular location">
    <subcellularLocation>
        <location evidence="1">Cytoplasm</location>
    </subcellularLocation>
</comment>
<comment type="alternative products">
    <event type="alternative splicing"/>
    <isoform>
        <id>Q96P15-1</id>
        <name>1</name>
        <sequence type="displayed"/>
    </isoform>
    <isoform>
        <id>Q96P15-2</id>
        <name>2</name>
        <sequence type="described" ref="VSP_040671"/>
    </isoform>
    <isoform>
        <id>Q96P15-3</id>
        <name>3</name>
        <sequence type="described" ref="VSP_040670"/>
    </isoform>
</comment>
<comment type="tissue specificity">
    <text evidence="5">Detected in a restricted number of tissues, including lung, placenta, prostate, and tonsil.</text>
</comment>
<comment type="polymorphism">
    <text evidence="5">Different combinations of variants define alleles SERPINB11a, SERPINB11b, SERPINB11c, SERPINB11d, SERPINB11e, SERPINB11f and SERPINB11g (PubMed:17562709). Variants in the scaffold leading to either a stop codon instead of a Glu at position 90, an Arg instead of the well conserved Trp at position 188, or a Pro instead of Ser at position 303 lead to the loss of inhibitory activity. The sequence shown in this entry matches the translation of the reference genome assembly (GRCh38/hg38).</text>
</comment>
<comment type="similarity">
    <text evidence="6">Belongs to the serpin family. Ov-serpin subfamily.</text>
</comment>
<sequence length="392" mass="44092">MGSLSTANVEFCLDVFKELNSNNIGDNIFFSSLSLLYALSMVLLGARGETEEQLEKVLHFSHTVDSLKPGFKDSPKCSQAGRIHSEFGVEFSQINQPDSNCTLSIANRLYGTKTMAFHQQYLSCSEKWYQARLQTVDFEQSTEETRKTINAWVENKTNGKVANLFGKSTIDPSSVMVLVNAIYFKGQWQNKFQVRETVKSPFQLSEGKNVTVEMMYQIGTFKLAFVKEPQMQVLELPYVNNKLSMIILLPVGIANLKQIEKQLNSGTFHEWTSSSNMMEREVEVHLPRFKLETKYELNSLLKSLGVTDLFNQVKADLSGMSPTKGLYLSKAIHKSYLDVSEEGTEAAAATGDSIAVKSLPMRAQFKANHPFLFFIRHTHTNTILFCGKLASP</sequence>
<feature type="chain" id="PRO_0000094117" description="Serpin B11">
    <location>
        <begin position="1"/>
        <end position="392"/>
    </location>
</feature>
<feature type="region of interest" description="RCL" evidence="1">
    <location>
        <begin position="341"/>
        <end position="365"/>
    </location>
</feature>
<feature type="site" description="Reactive bond" evidence="1">
    <location>
        <begin position="357"/>
        <end position="358"/>
    </location>
</feature>
<feature type="splice variant" id="VSP_040670" description="In isoform 3." evidence="6">
    <location>
        <begin position="57"/>
        <end position="258"/>
    </location>
</feature>
<feature type="splice variant" id="VSP_040671" description="In isoform 2." evidence="6">
    <location>
        <begin position="120"/>
        <end position="206"/>
    </location>
</feature>
<feature type="sequence variant" id="VAR_060331" description="In allele SERPINB11a, allele SERPINB11b, allele SERPINB11c, allele SERPINB11d and allele SERPINB11f; dbSNP:rs1395268." evidence="2 3 4 5">
    <original>E</original>
    <variation>A</variation>
    <location>
        <position position="51"/>
    </location>
</feature>
<feature type="sequence variant" id="VAR_088563" description="In allele SERPINB11f." evidence="5">
    <location>
        <begin position="90"/>
        <end position="392"/>
    </location>
</feature>
<feature type="sequence variant" id="VAR_012472" description="In allele SERPINB11a and allele SERPINB11c; dbSNP:rs17071550." evidence="3 5">
    <original>T</original>
    <variation>M</variation>
    <location>
        <position position="148"/>
    </location>
</feature>
<feature type="sequence variant" id="VAR_064572" description="In allele SERPINB11a; requires 2 nucleotide substitutions." evidence="5">
    <original>A</original>
    <variation>I</variation>
    <location>
        <position position="181"/>
    </location>
</feature>
<feature type="sequence variant" id="VAR_012473" description="In allele SERPINB11b and allele SERPINB11c." evidence="2 3 5">
    <original>A</original>
    <variation>T</variation>
    <location>
        <position position="181"/>
    </location>
</feature>
<feature type="sequence variant" id="VAR_060332" description="In allele SERPINB11a, allele SERPINB11b and allele SERPINB11c; dbSNP:rs1506419." evidence="2 3 5">
    <original>W</original>
    <variation>R</variation>
    <location>
        <position position="188"/>
    </location>
</feature>
<feature type="sequence variant" id="VAR_060333" description="In allele SERPINB11a, allele SERPINB11b, allele SERPINB11c and allele SERPINB11d; dbSNP:rs1395266." evidence="2 3 5">
    <original>T</original>
    <variation>I</variation>
    <location>
        <position position="293"/>
    </location>
</feature>
<feature type="sequence variant" id="VAR_060334" description="In allele SERPINB11a, allele SERPINB11b, allele SERPINB11c and allele SERPINB11d; dbSNP:rs1395267." evidence="2 3 5">
    <original>S</original>
    <variation>P</variation>
    <location>
        <position position="303"/>
    </location>
</feature>
<feature type="sequence variant" id="VAR_057177" description="In dbSNP:rs34811964.">
    <original>I</original>
    <variation>T</variation>
    <location>
        <position position="354"/>
    </location>
</feature>
<feature type="sequence conflict" description="In Ref. 1; AAV73921." evidence="6" ref="1">
    <original>C</original>
    <variation>R</variation>
    <location>
        <position position="12"/>
    </location>
</feature>
<feature type="sequence conflict" description="In Ref. 1; AAV73923." evidence="6" ref="1">
    <original>L</original>
    <variation>P</variation>
    <location>
        <position position="43"/>
    </location>
</feature>
<feature type="sequence conflict" description="In Ref. 1; AAV73920." evidence="6" ref="1">
    <original>F</original>
    <variation>S</variation>
    <location>
        <position position="91"/>
    </location>
</feature>
<feature type="sequence conflict" description="In Ref. 1; AAV73920." evidence="6" ref="1">
    <original>T</original>
    <variation>A</variation>
    <location>
        <position position="267"/>
    </location>
</feature>
<feature type="sequence conflict" description="In Ref. 1; AAV73921." evidence="6" ref="1">
    <original>V</original>
    <variation>A</variation>
    <location>
        <position position="356"/>
    </location>
</feature>
<feature type="sequence variant" id="VAR_088564" description="In allele SERPINB11e; dbSNP:rs1395268." evidence="5">
    <original>E</original>
    <variation>A</variation>
    <location sequence="Q96P15-2">
        <position position="51"/>
    </location>
</feature>
<feature type="sequence variant" id="VAR_088565" description="In allele SERPINB11e; dbSNP:rs1395266." evidence="5">
    <original>T</original>
    <variation>I</variation>
    <location sequence="Q96P15-2">
        <position position="206"/>
    </location>
</feature>
<feature type="sequence variant" id="VAR_088566" description="In allele SERPINB11e; dbSNP:rs1395267." evidence="5">
    <original>S</original>
    <variation>P</variation>
    <location sequence="Q96P15-2">
        <position position="216"/>
    </location>
</feature>
<feature type="sequence conflict" description="In Ref. 1; AAV73921." evidence="6" ref="1">
    <original>V</original>
    <variation>A</variation>
    <location sequence="Q96P15-2">
        <position position="269"/>
    </location>
</feature>
<feature type="sequence variant" id="VAR_088567" description="In allele SERPINB11g; dbSNP:rs1395268." evidence="5">
    <original>E</original>
    <variation>A</variation>
    <location sequence="Q96P15-3">
        <position position="51"/>
    </location>
</feature>
<feature type="sequence variant" id="VAR_088568" description="In allele SERPINB11g." evidence="5">
    <original>T</original>
    <variation>I</variation>
    <location sequence="Q96P15-3">
        <position position="91"/>
    </location>
</feature>
<feature type="sequence variant" id="VAR_088569" description="In allele SERPINB11g." evidence="5">
    <original>S</original>
    <variation>P</variation>
    <location sequence="Q96P15-3">
        <position position="101"/>
    </location>
</feature>
<feature type="sequence conflict" description="In Ref. 1; AAV73923." evidence="6" ref="1">
    <original>L</original>
    <variation>P</variation>
    <location sequence="Q96P15-3">
        <position position="43"/>
    </location>
</feature>
<gene>
    <name type="primary">SERPINB11</name>
</gene>
<keyword id="KW-0025">Alternative splicing</keyword>
<keyword id="KW-0963">Cytoplasm</keyword>
<keyword id="KW-0646">Protease inhibitor</keyword>
<keyword id="KW-1267">Proteomics identification</keyword>
<keyword id="KW-1185">Reference proteome</keyword>
<keyword id="KW-0722">Serine protease inhibitor</keyword>
<organism>
    <name type="scientific">Homo sapiens</name>
    <name type="common">Human</name>
    <dbReference type="NCBI Taxonomy" id="9606"/>
    <lineage>
        <taxon>Eukaryota</taxon>
        <taxon>Metazoa</taxon>
        <taxon>Chordata</taxon>
        <taxon>Craniata</taxon>
        <taxon>Vertebrata</taxon>
        <taxon>Euteleostomi</taxon>
        <taxon>Mammalia</taxon>
        <taxon>Eutheria</taxon>
        <taxon>Euarchontoglires</taxon>
        <taxon>Primates</taxon>
        <taxon>Haplorrhini</taxon>
        <taxon>Catarrhini</taxon>
        <taxon>Hominidae</taxon>
        <taxon>Homo</taxon>
    </lineage>
</organism>